<comment type="function">
    <text evidence="1">Catalyzes the conversion of dethiobiotin (DTB) to biotin by the insertion of a sulfur atom into dethiobiotin via a radical-based mechanism.</text>
</comment>
<comment type="catalytic activity">
    <reaction evidence="1">
        <text>(4R,5S)-dethiobiotin + (sulfur carrier)-SH + 2 reduced [2Fe-2S]-[ferredoxin] + 2 S-adenosyl-L-methionine = (sulfur carrier)-H + biotin + 2 5'-deoxyadenosine + 2 L-methionine + 2 oxidized [2Fe-2S]-[ferredoxin]</text>
        <dbReference type="Rhea" id="RHEA:22060"/>
        <dbReference type="Rhea" id="RHEA-COMP:10000"/>
        <dbReference type="Rhea" id="RHEA-COMP:10001"/>
        <dbReference type="Rhea" id="RHEA-COMP:14737"/>
        <dbReference type="Rhea" id="RHEA-COMP:14739"/>
        <dbReference type="ChEBI" id="CHEBI:17319"/>
        <dbReference type="ChEBI" id="CHEBI:29917"/>
        <dbReference type="ChEBI" id="CHEBI:33737"/>
        <dbReference type="ChEBI" id="CHEBI:33738"/>
        <dbReference type="ChEBI" id="CHEBI:57586"/>
        <dbReference type="ChEBI" id="CHEBI:57844"/>
        <dbReference type="ChEBI" id="CHEBI:59789"/>
        <dbReference type="ChEBI" id="CHEBI:64428"/>
        <dbReference type="ChEBI" id="CHEBI:149473"/>
        <dbReference type="EC" id="2.8.1.6"/>
    </reaction>
</comment>
<comment type="cofactor">
    <cofactor evidence="1">
        <name>[4Fe-4S] cluster</name>
        <dbReference type="ChEBI" id="CHEBI:49883"/>
    </cofactor>
    <text evidence="1">Binds 1 [4Fe-4S] cluster. The cluster is coordinated with 3 cysteines and an exchangeable S-adenosyl-L-methionine.</text>
</comment>
<comment type="cofactor">
    <cofactor evidence="1">
        <name>[2Fe-2S] cluster</name>
        <dbReference type="ChEBI" id="CHEBI:190135"/>
    </cofactor>
    <text evidence="1">Binds 1 [2Fe-2S] cluster. The cluster is coordinated with 3 cysteines and 1 arginine.</text>
</comment>
<comment type="pathway">
    <text evidence="1">Cofactor biosynthesis; biotin biosynthesis; biotin from 7,8-diaminononanoate: step 2/2.</text>
</comment>
<comment type="subunit">
    <text evidence="1">Homodimer.</text>
</comment>
<comment type="similarity">
    <text evidence="1">Belongs to the radical SAM superfamily. Biotin synthase family.</text>
</comment>
<gene>
    <name evidence="1" type="primary">bioB</name>
    <name type="ordered locus">ELI_04920</name>
</gene>
<sequence length="341" mass="37045">MTPIRTNWSRDEIAALFEQPFTELLFQAATVHRAYHPPEQVQLCTLLSIKTGGCPEDCGYCSQSVKADSGVEATKLMDVQRVLQSAAQAKDAGSQRFCMGAAWRNPKDRDMPAIVEIVKGVRDMGLETCMTLGMLTPKQADMLKDAGLDYYNHNVDTGPEYYERVISTRNYQDRLDTLQNVRDAGINVCSGGIVGMGETREDRVGFVHTLATLERHPESVPVNALVPVKGTVLGDMLADTPLAKIDDIEFVRTVAVARITMPLSMVRLSAGRESMSEATQALCFMAGANSIFTGDKLLTAANAGDDKDAALFDKLGLTALQGEEPLRRAKDEAGKAAIPAE</sequence>
<accession>Q2NB65</accession>
<evidence type="ECO:0000255" key="1">
    <source>
        <dbReference type="HAMAP-Rule" id="MF_01694"/>
    </source>
</evidence>
<evidence type="ECO:0000255" key="2">
    <source>
        <dbReference type="PROSITE-ProRule" id="PRU01266"/>
    </source>
</evidence>
<organism>
    <name type="scientific">Erythrobacter litoralis (strain HTCC2594)</name>
    <dbReference type="NCBI Taxonomy" id="314225"/>
    <lineage>
        <taxon>Bacteria</taxon>
        <taxon>Pseudomonadati</taxon>
        <taxon>Pseudomonadota</taxon>
        <taxon>Alphaproteobacteria</taxon>
        <taxon>Sphingomonadales</taxon>
        <taxon>Erythrobacteraceae</taxon>
        <taxon>Erythrobacter/Porphyrobacter group</taxon>
        <taxon>Erythrobacter</taxon>
    </lineage>
</organism>
<protein>
    <recommendedName>
        <fullName evidence="1">Biotin synthase</fullName>
        <ecNumber evidence="1">2.8.1.6</ecNumber>
    </recommendedName>
</protein>
<feature type="chain" id="PRO_0000381382" description="Biotin synthase">
    <location>
        <begin position="1"/>
        <end position="341"/>
    </location>
</feature>
<feature type="domain" description="Radical SAM core" evidence="2">
    <location>
        <begin position="39"/>
        <end position="263"/>
    </location>
</feature>
<feature type="binding site" evidence="1">
    <location>
        <position position="54"/>
    </location>
    <ligand>
        <name>[4Fe-4S] cluster</name>
        <dbReference type="ChEBI" id="CHEBI:49883"/>
        <note>4Fe-4S-S-AdoMet</note>
    </ligand>
</feature>
<feature type="binding site" evidence="1">
    <location>
        <position position="58"/>
    </location>
    <ligand>
        <name>[4Fe-4S] cluster</name>
        <dbReference type="ChEBI" id="CHEBI:49883"/>
        <note>4Fe-4S-S-AdoMet</note>
    </ligand>
</feature>
<feature type="binding site" evidence="1">
    <location>
        <position position="61"/>
    </location>
    <ligand>
        <name>[4Fe-4S] cluster</name>
        <dbReference type="ChEBI" id="CHEBI:49883"/>
        <note>4Fe-4S-S-AdoMet</note>
    </ligand>
</feature>
<feature type="binding site" evidence="1">
    <location>
        <position position="98"/>
    </location>
    <ligand>
        <name>[2Fe-2S] cluster</name>
        <dbReference type="ChEBI" id="CHEBI:190135"/>
    </ligand>
</feature>
<feature type="binding site" evidence="1">
    <location>
        <position position="129"/>
    </location>
    <ligand>
        <name>[2Fe-2S] cluster</name>
        <dbReference type="ChEBI" id="CHEBI:190135"/>
    </ligand>
</feature>
<feature type="binding site" evidence="1">
    <location>
        <position position="189"/>
    </location>
    <ligand>
        <name>[2Fe-2S] cluster</name>
        <dbReference type="ChEBI" id="CHEBI:190135"/>
    </ligand>
</feature>
<feature type="binding site" evidence="1">
    <location>
        <position position="267"/>
    </location>
    <ligand>
        <name>[2Fe-2S] cluster</name>
        <dbReference type="ChEBI" id="CHEBI:190135"/>
    </ligand>
</feature>
<dbReference type="EC" id="2.8.1.6" evidence="1"/>
<dbReference type="EMBL" id="CP000157">
    <property type="protein sequence ID" value="ABC63076.1"/>
    <property type="molecule type" value="Genomic_DNA"/>
</dbReference>
<dbReference type="RefSeq" id="WP_011413912.1">
    <property type="nucleotide sequence ID" value="NC_007722.1"/>
</dbReference>
<dbReference type="SMR" id="Q2NB65"/>
<dbReference type="STRING" id="314225.ELI_04920"/>
<dbReference type="KEGG" id="eli:ELI_04920"/>
<dbReference type="eggNOG" id="COG0502">
    <property type="taxonomic scope" value="Bacteria"/>
</dbReference>
<dbReference type="HOGENOM" id="CLU_033172_1_2_5"/>
<dbReference type="OrthoDB" id="9786826at2"/>
<dbReference type="UniPathway" id="UPA00078">
    <property type="reaction ID" value="UER00162"/>
</dbReference>
<dbReference type="Proteomes" id="UP000008808">
    <property type="component" value="Chromosome"/>
</dbReference>
<dbReference type="GO" id="GO:0051537">
    <property type="term" value="F:2 iron, 2 sulfur cluster binding"/>
    <property type="evidence" value="ECO:0007669"/>
    <property type="project" value="UniProtKB-KW"/>
</dbReference>
<dbReference type="GO" id="GO:0051539">
    <property type="term" value="F:4 iron, 4 sulfur cluster binding"/>
    <property type="evidence" value="ECO:0007669"/>
    <property type="project" value="UniProtKB-KW"/>
</dbReference>
<dbReference type="GO" id="GO:0004076">
    <property type="term" value="F:biotin synthase activity"/>
    <property type="evidence" value="ECO:0007669"/>
    <property type="project" value="UniProtKB-UniRule"/>
</dbReference>
<dbReference type="GO" id="GO:0005506">
    <property type="term" value="F:iron ion binding"/>
    <property type="evidence" value="ECO:0007669"/>
    <property type="project" value="UniProtKB-UniRule"/>
</dbReference>
<dbReference type="GO" id="GO:0009102">
    <property type="term" value="P:biotin biosynthetic process"/>
    <property type="evidence" value="ECO:0007669"/>
    <property type="project" value="UniProtKB-UniRule"/>
</dbReference>
<dbReference type="CDD" id="cd01335">
    <property type="entry name" value="Radical_SAM"/>
    <property type="match status" value="1"/>
</dbReference>
<dbReference type="FunFam" id="3.20.20.70:FF:000011">
    <property type="entry name" value="Biotin synthase"/>
    <property type="match status" value="1"/>
</dbReference>
<dbReference type="Gene3D" id="3.20.20.70">
    <property type="entry name" value="Aldolase class I"/>
    <property type="match status" value="1"/>
</dbReference>
<dbReference type="HAMAP" id="MF_01694">
    <property type="entry name" value="BioB"/>
    <property type="match status" value="1"/>
</dbReference>
<dbReference type="InterPro" id="IPR013785">
    <property type="entry name" value="Aldolase_TIM"/>
</dbReference>
<dbReference type="InterPro" id="IPR010722">
    <property type="entry name" value="BATS_dom"/>
</dbReference>
<dbReference type="InterPro" id="IPR002684">
    <property type="entry name" value="Biotin_synth/BioAB"/>
</dbReference>
<dbReference type="InterPro" id="IPR024177">
    <property type="entry name" value="Biotin_synthase"/>
</dbReference>
<dbReference type="InterPro" id="IPR006638">
    <property type="entry name" value="Elp3/MiaA/NifB-like_rSAM"/>
</dbReference>
<dbReference type="InterPro" id="IPR007197">
    <property type="entry name" value="rSAM"/>
</dbReference>
<dbReference type="NCBIfam" id="TIGR00433">
    <property type="entry name" value="bioB"/>
    <property type="match status" value="1"/>
</dbReference>
<dbReference type="PANTHER" id="PTHR22976">
    <property type="entry name" value="BIOTIN SYNTHASE"/>
    <property type="match status" value="1"/>
</dbReference>
<dbReference type="PANTHER" id="PTHR22976:SF2">
    <property type="entry name" value="BIOTIN SYNTHASE, MITOCHONDRIAL"/>
    <property type="match status" value="1"/>
</dbReference>
<dbReference type="Pfam" id="PF06968">
    <property type="entry name" value="BATS"/>
    <property type="match status" value="1"/>
</dbReference>
<dbReference type="Pfam" id="PF04055">
    <property type="entry name" value="Radical_SAM"/>
    <property type="match status" value="1"/>
</dbReference>
<dbReference type="PIRSF" id="PIRSF001619">
    <property type="entry name" value="Biotin_synth"/>
    <property type="match status" value="1"/>
</dbReference>
<dbReference type="SFLD" id="SFLDG01060">
    <property type="entry name" value="BATS_domain_containing"/>
    <property type="match status" value="1"/>
</dbReference>
<dbReference type="SFLD" id="SFLDF00272">
    <property type="entry name" value="biotin_synthase"/>
    <property type="match status" value="1"/>
</dbReference>
<dbReference type="SMART" id="SM00876">
    <property type="entry name" value="BATS"/>
    <property type="match status" value="1"/>
</dbReference>
<dbReference type="SMART" id="SM00729">
    <property type="entry name" value="Elp3"/>
    <property type="match status" value="1"/>
</dbReference>
<dbReference type="SUPFAM" id="SSF102114">
    <property type="entry name" value="Radical SAM enzymes"/>
    <property type="match status" value="1"/>
</dbReference>
<dbReference type="PROSITE" id="PS51918">
    <property type="entry name" value="RADICAL_SAM"/>
    <property type="match status" value="1"/>
</dbReference>
<proteinExistence type="inferred from homology"/>
<name>BIOB_ERYLH</name>
<keyword id="KW-0001">2Fe-2S</keyword>
<keyword id="KW-0004">4Fe-4S</keyword>
<keyword id="KW-0093">Biotin biosynthesis</keyword>
<keyword id="KW-0408">Iron</keyword>
<keyword id="KW-0411">Iron-sulfur</keyword>
<keyword id="KW-0479">Metal-binding</keyword>
<keyword id="KW-1185">Reference proteome</keyword>
<keyword id="KW-0949">S-adenosyl-L-methionine</keyword>
<keyword id="KW-0808">Transferase</keyword>
<reference key="1">
    <citation type="journal article" date="2009" name="J. Bacteriol.">
        <title>Complete genome sequence of Erythrobacter litoralis HTCC2594.</title>
        <authorList>
            <person name="Oh H.M."/>
            <person name="Giovannoni S.J."/>
            <person name="Ferriera S."/>
            <person name="Johnson J."/>
            <person name="Cho J.C."/>
        </authorList>
    </citation>
    <scope>NUCLEOTIDE SEQUENCE [LARGE SCALE GENOMIC DNA]</scope>
    <source>
        <strain>HTCC2594</strain>
    </source>
</reference>